<feature type="chain" id="PRO_1000117142" description="UDP-N-acetylenolpyruvoylglucosamine reductase">
    <location>
        <begin position="1"/>
        <end position="295"/>
    </location>
</feature>
<feature type="domain" description="FAD-binding PCMH-type" evidence="1">
    <location>
        <begin position="23"/>
        <end position="188"/>
    </location>
</feature>
<feature type="active site" evidence="1">
    <location>
        <position position="167"/>
    </location>
</feature>
<feature type="active site" description="Proton donor" evidence="1">
    <location>
        <position position="217"/>
    </location>
</feature>
<feature type="active site" evidence="1">
    <location>
        <position position="287"/>
    </location>
</feature>
<gene>
    <name evidence="1" type="primary">murB</name>
    <name type="ordered locus">Spy49_0856</name>
</gene>
<reference key="1">
    <citation type="journal article" date="2008" name="J. Bacteriol.">
        <title>Genome sequence of a nephritogenic and highly transformable M49 strain of Streptococcus pyogenes.</title>
        <authorList>
            <person name="McShan W.M."/>
            <person name="Ferretti J.J."/>
            <person name="Karasawa T."/>
            <person name="Suvorov A.N."/>
            <person name="Lin S."/>
            <person name="Qin B."/>
            <person name="Jia H."/>
            <person name="Kenton S."/>
            <person name="Najar F."/>
            <person name="Wu H."/>
            <person name="Scott J."/>
            <person name="Roe B.A."/>
            <person name="Savic D.J."/>
        </authorList>
    </citation>
    <scope>NUCLEOTIDE SEQUENCE [LARGE SCALE GENOMIC DNA]</scope>
    <source>
        <strain>NZ131</strain>
    </source>
</reference>
<protein>
    <recommendedName>
        <fullName evidence="1">UDP-N-acetylenolpyruvoylglucosamine reductase</fullName>
        <ecNumber evidence="1">1.3.1.98</ecNumber>
    </recommendedName>
    <alternativeName>
        <fullName evidence="1">UDP-N-acetylmuramate dehydrogenase</fullName>
    </alternativeName>
</protein>
<name>MURB_STRPZ</name>
<dbReference type="EC" id="1.3.1.98" evidence="1"/>
<dbReference type="EMBL" id="CP000829">
    <property type="protein sequence ID" value="ACI61164.1"/>
    <property type="molecule type" value="Genomic_DNA"/>
</dbReference>
<dbReference type="SMR" id="B5XLF2"/>
<dbReference type="KEGG" id="soz:Spy49_0856"/>
<dbReference type="HOGENOM" id="CLU_035304_1_1_9"/>
<dbReference type="UniPathway" id="UPA00219"/>
<dbReference type="Proteomes" id="UP000001039">
    <property type="component" value="Chromosome"/>
</dbReference>
<dbReference type="GO" id="GO:0005829">
    <property type="term" value="C:cytosol"/>
    <property type="evidence" value="ECO:0007669"/>
    <property type="project" value="TreeGrafter"/>
</dbReference>
<dbReference type="GO" id="GO:0071949">
    <property type="term" value="F:FAD binding"/>
    <property type="evidence" value="ECO:0007669"/>
    <property type="project" value="InterPro"/>
</dbReference>
<dbReference type="GO" id="GO:0008762">
    <property type="term" value="F:UDP-N-acetylmuramate dehydrogenase activity"/>
    <property type="evidence" value="ECO:0007669"/>
    <property type="project" value="UniProtKB-UniRule"/>
</dbReference>
<dbReference type="GO" id="GO:0051301">
    <property type="term" value="P:cell division"/>
    <property type="evidence" value="ECO:0007669"/>
    <property type="project" value="UniProtKB-KW"/>
</dbReference>
<dbReference type="GO" id="GO:0071555">
    <property type="term" value="P:cell wall organization"/>
    <property type="evidence" value="ECO:0007669"/>
    <property type="project" value="UniProtKB-KW"/>
</dbReference>
<dbReference type="GO" id="GO:0009252">
    <property type="term" value="P:peptidoglycan biosynthetic process"/>
    <property type="evidence" value="ECO:0007669"/>
    <property type="project" value="UniProtKB-UniRule"/>
</dbReference>
<dbReference type="GO" id="GO:0008360">
    <property type="term" value="P:regulation of cell shape"/>
    <property type="evidence" value="ECO:0007669"/>
    <property type="project" value="UniProtKB-KW"/>
</dbReference>
<dbReference type="Gene3D" id="3.30.465.10">
    <property type="match status" value="1"/>
</dbReference>
<dbReference type="Gene3D" id="3.90.78.10">
    <property type="entry name" value="UDP-N-acetylenolpyruvoylglucosamine reductase, C-terminal domain"/>
    <property type="match status" value="1"/>
</dbReference>
<dbReference type="Gene3D" id="3.30.43.10">
    <property type="entry name" value="Uridine Diphospho-n-acetylenolpyruvylglucosamine Reductase, domain 2"/>
    <property type="match status" value="1"/>
</dbReference>
<dbReference type="HAMAP" id="MF_00037">
    <property type="entry name" value="MurB"/>
    <property type="match status" value="1"/>
</dbReference>
<dbReference type="InterPro" id="IPR016166">
    <property type="entry name" value="FAD-bd_PCMH"/>
</dbReference>
<dbReference type="InterPro" id="IPR036318">
    <property type="entry name" value="FAD-bd_PCMH-like_sf"/>
</dbReference>
<dbReference type="InterPro" id="IPR016167">
    <property type="entry name" value="FAD-bd_PCMH_sub1"/>
</dbReference>
<dbReference type="InterPro" id="IPR016169">
    <property type="entry name" value="FAD-bd_PCMH_sub2"/>
</dbReference>
<dbReference type="InterPro" id="IPR003170">
    <property type="entry name" value="MurB"/>
</dbReference>
<dbReference type="InterPro" id="IPR011601">
    <property type="entry name" value="MurB_C"/>
</dbReference>
<dbReference type="InterPro" id="IPR036635">
    <property type="entry name" value="MurB_C_sf"/>
</dbReference>
<dbReference type="InterPro" id="IPR006094">
    <property type="entry name" value="Oxid_FAD_bind_N"/>
</dbReference>
<dbReference type="NCBIfam" id="TIGR00179">
    <property type="entry name" value="murB"/>
    <property type="match status" value="1"/>
</dbReference>
<dbReference type="NCBIfam" id="NF010480">
    <property type="entry name" value="PRK13905.1"/>
    <property type="match status" value="1"/>
</dbReference>
<dbReference type="PANTHER" id="PTHR21071">
    <property type="entry name" value="UDP-N-ACETYLENOLPYRUVOYLGLUCOSAMINE REDUCTASE"/>
    <property type="match status" value="1"/>
</dbReference>
<dbReference type="PANTHER" id="PTHR21071:SF4">
    <property type="entry name" value="UDP-N-ACETYLENOLPYRUVOYLGLUCOSAMINE REDUCTASE"/>
    <property type="match status" value="1"/>
</dbReference>
<dbReference type="Pfam" id="PF01565">
    <property type="entry name" value="FAD_binding_4"/>
    <property type="match status" value="1"/>
</dbReference>
<dbReference type="Pfam" id="PF02873">
    <property type="entry name" value="MurB_C"/>
    <property type="match status" value="1"/>
</dbReference>
<dbReference type="SUPFAM" id="SSF56176">
    <property type="entry name" value="FAD-binding/transporter-associated domain-like"/>
    <property type="match status" value="1"/>
</dbReference>
<dbReference type="SUPFAM" id="SSF56194">
    <property type="entry name" value="Uridine diphospho-N-Acetylenolpyruvylglucosamine reductase, MurB, C-terminal domain"/>
    <property type="match status" value="1"/>
</dbReference>
<dbReference type="PROSITE" id="PS51387">
    <property type="entry name" value="FAD_PCMH"/>
    <property type="match status" value="1"/>
</dbReference>
<comment type="function">
    <text evidence="1">Cell wall formation.</text>
</comment>
<comment type="catalytic activity">
    <reaction evidence="1">
        <text>UDP-N-acetyl-alpha-D-muramate + NADP(+) = UDP-N-acetyl-3-O-(1-carboxyvinyl)-alpha-D-glucosamine + NADPH + H(+)</text>
        <dbReference type="Rhea" id="RHEA:12248"/>
        <dbReference type="ChEBI" id="CHEBI:15378"/>
        <dbReference type="ChEBI" id="CHEBI:57783"/>
        <dbReference type="ChEBI" id="CHEBI:58349"/>
        <dbReference type="ChEBI" id="CHEBI:68483"/>
        <dbReference type="ChEBI" id="CHEBI:70757"/>
        <dbReference type="EC" id="1.3.1.98"/>
    </reaction>
</comment>
<comment type="cofactor">
    <cofactor evidence="1">
        <name>FAD</name>
        <dbReference type="ChEBI" id="CHEBI:57692"/>
    </cofactor>
</comment>
<comment type="pathway">
    <text evidence="1">Cell wall biogenesis; peptidoglycan biosynthesis.</text>
</comment>
<comment type="subcellular location">
    <subcellularLocation>
        <location evidence="1">Cytoplasm</location>
    </subcellularLocation>
</comment>
<comment type="similarity">
    <text evidence="1">Belongs to the MurB family.</text>
</comment>
<organism>
    <name type="scientific">Streptococcus pyogenes serotype M49 (strain NZ131)</name>
    <dbReference type="NCBI Taxonomy" id="471876"/>
    <lineage>
        <taxon>Bacteria</taxon>
        <taxon>Bacillati</taxon>
        <taxon>Bacillota</taxon>
        <taxon>Bacilli</taxon>
        <taxon>Lactobacillales</taxon>
        <taxon>Streptococcaceae</taxon>
        <taxon>Streptococcus</taxon>
    </lineage>
</organism>
<evidence type="ECO:0000255" key="1">
    <source>
        <dbReference type="HAMAP-Rule" id="MF_00037"/>
    </source>
</evidence>
<accession>B5XLF2</accession>
<sequence length="295" mass="32354">MITELHGIDIRENEPLKHYTYTKVGGPADFLAFPRNRYELSRIVAYANKENMPWLVLGNASNLIVRDGGIRGFVIMFDKLNAVHLNGYTLEAEAGANLIETTKIAKFHSLTGFEFACGIPGSIGGAVFMNAGAYGGEISHIFLSAKVLTSSGEIKTISARDMAFGYRHSAIQETGDIVISAKFALKPGNYDTISQEMNRLNHLRQLKQPLEFPSCGSVFKRPPGHFAGQLIMEANLKGHRIGGVEVSEKHAGFMINVADGTAKDYEDLIAYVIETVENHSGVRLEPEVRIIGENL</sequence>
<keyword id="KW-0131">Cell cycle</keyword>
<keyword id="KW-0132">Cell division</keyword>
<keyword id="KW-0133">Cell shape</keyword>
<keyword id="KW-0961">Cell wall biogenesis/degradation</keyword>
<keyword id="KW-0963">Cytoplasm</keyword>
<keyword id="KW-0274">FAD</keyword>
<keyword id="KW-0285">Flavoprotein</keyword>
<keyword id="KW-0521">NADP</keyword>
<keyword id="KW-0560">Oxidoreductase</keyword>
<keyword id="KW-0573">Peptidoglycan synthesis</keyword>
<proteinExistence type="inferred from homology"/>